<dbReference type="EMBL" id="AE014613">
    <property type="protein sequence ID" value="AAO68979.1"/>
    <property type="molecule type" value="Genomic_DNA"/>
</dbReference>
<dbReference type="EMBL" id="AL513382">
    <property type="protein sequence ID" value="CAD01906.1"/>
    <property type="molecule type" value="Genomic_DNA"/>
</dbReference>
<dbReference type="RefSeq" id="NP_456069.1">
    <property type="nucleotide sequence ID" value="NC_003198.1"/>
</dbReference>
<dbReference type="RefSeq" id="WP_000217946.1">
    <property type="nucleotide sequence ID" value="NZ_WSUR01000011.1"/>
</dbReference>
<dbReference type="SMR" id="Q8XGJ8"/>
<dbReference type="STRING" id="220341.gene:17585596"/>
<dbReference type="GeneID" id="66755902"/>
<dbReference type="KEGG" id="stt:t1329"/>
<dbReference type="KEGG" id="sty:STY1661"/>
<dbReference type="PATRIC" id="fig|220341.7.peg.1671"/>
<dbReference type="eggNOG" id="ENOG5032S5U">
    <property type="taxonomic scope" value="Bacteria"/>
</dbReference>
<dbReference type="HOGENOM" id="CLU_190629_0_0_6"/>
<dbReference type="OMA" id="PKSVWHF"/>
<dbReference type="OrthoDB" id="6487408at2"/>
<dbReference type="Proteomes" id="UP000000541">
    <property type="component" value="Chromosome"/>
</dbReference>
<dbReference type="Proteomes" id="UP000002670">
    <property type="component" value="Chromosome"/>
</dbReference>
<dbReference type="GO" id="GO:0003677">
    <property type="term" value="F:DNA binding"/>
    <property type="evidence" value="ECO:0007669"/>
    <property type="project" value="UniProtKB-KW"/>
</dbReference>
<dbReference type="Gene3D" id="1.20.1280.40">
    <property type="entry name" value="HHA"/>
    <property type="match status" value="1"/>
</dbReference>
<dbReference type="InterPro" id="IPR007985">
    <property type="entry name" value="Hemolysn_expr_modulating_HHA"/>
</dbReference>
<dbReference type="InterPro" id="IPR036666">
    <property type="entry name" value="HHA_sf"/>
</dbReference>
<dbReference type="NCBIfam" id="NF007703">
    <property type="entry name" value="PRK10391.1"/>
    <property type="match status" value="1"/>
</dbReference>
<dbReference type="Pfam" id="PF05321">
    <property type="entry name" value="HHA"/>
    <property type="match status" value="1"/>
</dbReference>
<dbReference type="SUPFAM" id="SSF68989">
    <property type="entry name" value="Hemolysin expression modulating protein HHA"/>
    <property type="match status" value="1"/>
</dbReference>
<feature type="chain" id="PRO_0000201737" description="Transcription modulator YdgT">
    <location>
        <begin position="1"/>
        <end position="71"/>
    </location>
</feature>
<feature type="site" description="Interacts with H-NS" evidence="1">
    <location>
        <position position="44"/>
    </location>
</feature>
<sequence>MTVQDYLLKFRKISSLESLEKLFDHLNYTLTDDMDIVNMYRAADHRRAELVSGGRLFDVGQVPQSVWRYVQ</sequence>
<protein>
    <recommendedName>
        <fullName>Transcription modulator YdgT</fullName>
    </recommendedName>
    <alternativeName>
        <fullName>H-NS/StpA-binding protein 2</fullName>
    </alternativeName>
    <alternativeName>
        <fullName>OriC-binding nucleoid-associated protein</fullName>
    </alternativeName>
</protein>
<accession>Q8XGJ8</accession>
<accession>Q7AMY0</accession>
<name>YDGT_SALTI</name>
<organism>
    <name type="scientific">Salmonella typhi</name>
    <dbReference type="NCBI Taxonomy" id="90370"/>
    <lineage>
        <taxon>Bacteria</taxon>
        <taxon>Pseudomonadati</taxon>
        <taxon>Pseudomonadota</taxon>
        <taxon>Gammaproteobacteria</taxon>
        <taxon>Enterobacterales</taxon>
        <taxon>Enterobacteriaceae</taxon>
        <taxon>Salmonella</taxon>
    </lineage>
</organism>
<keyword id="KW-0238">DNA-binding</keyword>
<keyword id="KW-0804">Transcription</keyword>
<keyword id="KW-0805">Transcription regulation</keyword>
<gene>
    <name type="primary">ydgT</name>
    <name type="synonym">cnu</name>
    <name type="ordered locus">STY1661</name>
    <name type="ordered locus">t1329</name>
</gene>
<reference key="1">
    <citation type="journal article" date="2003" name="J. Bacteriol.">
        <title>Comparative genomics of Salmonella enterica serovar Typhi strains Ty2 and CT18.</title>
        <authorList>
            <person name="Deng W."/>
            <person name="Liou S.-R."/>
            <person name="Plunkett G. III"/>
            <person name="Mayhew G.F."/>
            <person name="Rose D.J."/>
            <person name="Burland V."/>
            <person name="Kodoyianni V."/>
            <person name="Schwartz D.C."/>
            <person name="Blattner F.R."/>
        </authorList>
    </citation>
    <scope>NUCLEOTIDE SEQUENCE [LARGE SCALE GENOMIC DNA]</scope>
    <source>
        <strain>ATCC 700931 / Ty2</strain>
    </source>
</reference>
<reference key="2">
    <citation type="journal article" date="2001" name="Nature">
        <title>Complete genome sequence of a multiple drug resistant Salmonella enterica serovar Typhi CT18.</title>
        <authorList>
            <person name="Parkhill J."/>
            <person name="Dougan G."/>
            <person name="James K.D."/>
            <person name="Thomson N.R."/>
            <person name="Pickard D."/>
            <person name="Wain J."/>
            <person name="Churcher C.M."/>
            <person name="Mungall K.L."/>
            <person name="Bentley S.D."/>
            <person name="Holden M.T.G."/>
            <person name="Sebaihia M."/>
            <person name="Baker S."/>
            <person name="Basham D."/>
            <person name="Brooks K."/>
            <person name="Chillingworth T."/>
            <person name="Connerton P."/>
            <person name="Cronin A."/>
            <person name="Davis P."/>
            <person name="Davies R.M."/>
            <person name="Dowd L."/>
            <person name="White N."/>
            <person name="Farrar J."/>
            <person name="Feltwell T."/>
            <person name="Hamlin N."/>
            <person name="Haque A."/>
            <person name="Hien T.T."/>
            <person name="Holroyd S."/>
            <person name="Jagels K."/>
            <person name="Krogh A."/>
            <person name="Larsen T.S."/>
            <person name="Leather S."/>
            <person name="Moule S."/>
            <person name="O'Gaora P."/>
            <person name="Parry C."/>
            <person name="Quail M.A."/>
            <person name="Rutherford K.M."/>
            <person name="Simmonds M."/>
            <person name="Skelton J."/>
            <person name="Stevens K."/>
            <person name="Whitehead S."/>
            <person name="Barrell B.G."/>
        </authorList>
    </citation>
    <scope>NUCLEOTIDE SEQUENCE [LARGE SCALE GENOMIC DNA]</scope>
    <source>
        <strain>CT18</strain>
    </source>
</reference>
<evidence type="ECO:0000250" key="1"/>
<evidence type="ECO:0000250" key="2">
    <source>
        <dbReference type="UniProtKB" id="A0A0H3NGF1"/>
    </source>
</evidence>
<evidence type="ECO:0000250" key="3">
    <source>
        <dbReference type="UniProtKB" id="P64467"/>
    </source>
</evidence>
<evidence type="ECO:0000250" key="4">
    <source>
        <dbReference type="UniProtKB" id="Q7CQK5"/>
    </source>
</evidence>
<evidence type="ECO:0000305" key="5"/>
<proteinExistence type="inferred from homology"/>
<comment type="function">
    <text evidence="2 3">Binds to H-NS and modified the range of genes it silences; H-NS alonge silences core gene while the H-NS-Hha complex (and presumably also H-NS-YdgT) silences genes acquired by horizontal gene transfer. Plays a role silencing virulence factors in the absence of factors that induce pathogenicity (By similarity). The complex formed with H-NS binds to the specific 26-bp cnb site in the origin of replication oriC (By similarity).</text>
</comment>
<comment type="subunit">
    <text evidence="4">Forms complexes with both H-NS and StpA.</text>
</comment>
<comment type="similarity">
    <text evidence="5">Belongs to the Hha/YmoA/Cnu family.</text>
</comment>